<feature type="chain" id="PRO_0000168613" description="Uncharacterized protein YbaA">
    <location>
        <begin position="1"/>
        <end position="117"/>
    </location>
</feature>
<dbReference type="EMBL" id="AE005174">
    <property type="protein sequence ID" value="AAG54805.1"/>
    <property type="molecule type" value="Genomic_DNA"/>
</dbReference>
<dbReference type="EMBL" id="BA000007">
    <property type="protein sequence ID" value="BAB33932.1"/>
    <property type="molecule type" value="Genomic_DNA"/>
</dbReference>
<dbReference type="PIR" id="A85543">
    <property type="entry name" value="A85543"/>
</dbReference>
<dbReference type="PIR" id="E90692">
    <property type="entry name" value="E90692"/>
</dbReference>
<dbReference type="RefSeq" id="NP_308536.1">
    <property type="nucleotide sequence ID" value="NC_002695.1"/>
</dbReference>
<dbReference type="RefSeq" id="WP_000878140.1">
    <property type="nucleotide sequence ID" value="NZ_VOAI01000005.1"/>
</dbReference>
<dbReference type="SMR" id="P0AAQ8"/>
<dbReference type="STRING" id="155864.Z0568"/>
<dbReference type="GeneID" id="914613"/>
<dbReference type="KEGG" id="ece:Z0568"/>
<dbReference type="KEGG" id="ecs:ECs_0509"/>
<dbReference type="PATRIC" id="fig|386585.9.peg.614"/>
<dbReference type="eggNOG" id="COG5507">
    <property type="taxonomic scope" value="Bacteria"/>
</dbReference>
<dbReference type="HOGENOM" id="CLU_136844_0_0_6"/>
<dbReference type="OMA" id="VECWADD"/>
<dbReference type="Proteomes" id="UP000000558">
    <property type="component" value="Chromosome"/>
</dbReference>
<dbReference type="Proteomes" id="UP000002519">
    <property type="component" value="Chromosome"/>
</dbReference>
<dbReference type="Gene3D" id="3.30.70.100">
    <property type="match status" value="1"/>
</dbReference>
<dbReference type="InterPro" id="IPR011008">
    <property type="entry name" value="Dimeric_a/b-barrel"/>
</dbReference>
<dbReference type="InterPro" id="IPR009874">
    <property type="entry name" value="DUF1428"/>
</dbReference>
<dbReference type="Pfam" id="PF07237">
    <property type="entry name" value="DUF1428"/>
    <property type="match status" value="1"/>
</dbReference>
<dbReference type="PIRSF" id="PIRSF007028">
    <property type="entry name" value="UCP007028"/>
    <property type="match status" value="1"/>
</dbReference>
<dbReference type="SUPFAM" id="SSF54909">
    <property type="entry name" value="Dimeric alpha+beta barrel"/>
    <property type="match status" value="1"/>
</dbReference>
<organism>
    <name type="scientific">Escherichia coli O157:H7</name>
    <dbReference type="NCBI Taxonomy" id="83334"/>
    <lineage>
        <taxon>Bacteria</taxon>
        <taxon>Pseudomonadati</taxon>
        <taxon>Pseudomonadota</taxon>
        <taxon>Gammaproteobacteria</taxon>
        <taxon>Enterobacterales</taxon>
        <taxon>Enterobacteriaceae</taxon>
        <taxon>Escherichia</taxon>
    </lineage>
</organism>
<sequence length="117" mass="13318">MKYVDGFVVAVPADKKDAYREMAAKAAPLFKEFGALRIVECWASDVPDGKVTDFRMAVKAEENEEVVFSWIEYPSKEVRDAANQKMMSDPRMKEFGESMPFDGKRMIYGGFESIIDE</sequence>
<reference key="1">
    <citation type="journal article" date="2001" name="Nature">
        <title>Genome sequence of enterohaemorrhagic Escherichia coli O157:H7.</title>
        <authorList>
            <person name="Perna N.T."/>
            <person name="Plunkett G. III"/>
            <person name="Burland V."/>
            <person name="Mau B."/>
            <person name="Glasner J.D."/>
            <person name="Rose D.J."/>
            <person name="Mayhew G.F."/>
            <person name="Evans P.S."/>
            <person name="Gregor J."/>
            <person name="Kirkpatrick H.A."/>
            <person name="Posfai G."/>
            <person name="Hackett J."/>
            <person name="Klink S."/>
            <person name="Boutin A."/>
            <person name="Shao Y."/>
            <person name="Miller L."/>
            <person name="Grotbeck E.J."/>
            <person name="Davis N.W."/>
            <person name="Lim A."/>
            <person name="Dimalanta E.T."/>
            <person name="Potamousis K."/>
            <person name="Apodaca J."/>
            <person name="Anantharaman T.S."/>
            <person name="Lin J."/>
            <person name="Yen G."/>
            <person name="Schwartz D.C."/>
            <person name="Welch R.A."/>
            <person name="Blattner F.R."/>
        </authorList>
    </citation>
    <scope>NUCLEOTIDE SEQUENCE [LARGE SCALE GENOMIC DNA]</scope>
    <source>
        <strain>O157:H7 / EDL933 / ATCC 700927 / EHEC</strain>
    </source>
</reference>
<reference key="2">
    <citation type="journal article" date="2001" name="DNA Res.">
        <title>Complete genome sequence of enterohemorrhagic Escherichia coli O157:H7 and genomic comparison with a laboratory strain K-12.</title>
        <authorList>
            <person name="Hayashi T."/>
            <person name="Makino K."/>
            <person name="Ohnishi M."/>
            <person name="Kurokawa K."/>
            <person name="Ishii K."/>
            <person name="Yokoyama K."/>
            <person name="Han C.-G."/>
            <person name="Ohtsubo E."/>
            <person name="Nakayama K."/>
            <person name="Murata T."/>
            <person name="Tanaka M."/>
            <person name="Tobe T."/>
            <person name="Iida T."/>
            <person name="Takami H."/>
            <person name="Honda T."/>
            <person name="Sasakawa C."/>
            <person name="Ogasawara N."/>
            <person name="Yasunaga T."/>
            <person name="Kuhara S."/>
            <person name="Shiba T."/>
            <person name="Hattori M."/>
            <person name="Shinagawa H."/>
        </authorList>
    </citation>
    <scope>NUCLEOTIDE SEQUENCE [LARGE SCALE GENOMIC DNA]</scope>
    <source>
        <strain>O157:H7 / Sakai / RIMD 0509952 / EHEC</strain>
    </source>
</reference>
<keyword id="KW-1185">Reference proteome</keyword>
<gene>
    <name type="primary">ybaA</name>
    <name type="ordered locus">Z0568</name>
    <name type="ordered locus">ECs0509</name>
</gene>
<proteinExistence type="predicted"/>
<accession>P0AAQ8</accession>
<accession>P09161</accession>
<protein>
    <recommendedName>
        <fullName>Uncharacterized protein YbaA</fullName>
    </recommendedName>
</protein>
<name>YBAA_ECO57</name>